<gene>
    <name evidence="1" type="primary">dapA</name>
    <name type="ordered locus">SARI_00393</name>
</gene>
<name>DAPA_SALAR</name>
<accession>A9MHQ2</accession>
<dbReference type="EC" id="4.3.3.7" evidence="1"/>
<dbReference type="EMBL" id="CP000880">
    <property type="protein sequence ID" value="ABX20330.1"/>
    <property type="molecule type" value="Genomic_DNA"/>
</dbReference>
<dbReference type="SMR" id="A9MHQ2"/>
<dbReference type="STRING" id="41514.SARI_00393"/>
<dbReference type="KEGG" id="ses:SARI_00393"/>
<dbReference type="HOGENOM" id="CLU_049343_7_1_6"/>
<dbReference type="UniPathway" id="UPA00034">
    <property type="reaction ID" value="UER00017"/>
</dbReference>
<dbReference type="Proteomes" id="UP000002084">
    <property type="component" value="Chromosome"/>
</dbReference>
<dbReference type="GO" id="GO:0005829">
    <property type="term" value="C:cytosol"/>
    <property type="evidence" value="ECO:0007669"/>
    <property type="project" value="TreeGrafter"/>
</dbReference>
<dbReference type="GO" id="GO:0008840">
    <property type="term" value="F:4-hydroxy-tetrahydrodipicolinate synthase activity"/>
    <property type="evidence" value="ECO:0007669"/>
    <property type="project" value="UniProtKB-UniRule"/>
</dbReference>
<dbReference type="GO" id="GO:0019877">
    <property type="term" value="P:diaminopimelate biosynthetic process"/>
    <property type="evidence" value="ECO:0007669"/>
    <property type="project" value="UniProtKB-UniRule"/>
</dbReference>
<dbReference type="GO" id="GO:0009089">
    <property type="term" value="P:lysine biosynthetic process via diaminopimelate"/>
    <property type="evidence" value="ECO:0007669"/>
    <property type="project" value="UniProtKB-UniRule"/>
</dbReference>
<dbReference type="CDD" id="cd00950">
    <property type="entry name" value="DHDPS"/>
    <property type="match status" value="1"/>
</dbReference>
<dbReference type="FunFam" id="3.20.20.70:FF:000046">
    <property type="entry name" value="4-hydroxy-tetrahydrodipicolinate synthase"/>
    <property type="match status" value="1"/>
</dbReference>
<dbReference type="Gene3D" id="3.20.20.70">
    <property type="entry name" value="Aldolase class I"/>
    <property type="match status" value="1"/>
</dbReference>
<dbReference type="HAMAP" id="MF_00418">
    <property type="entry name" value="DapA"/>
    <property type="match status" value="1"/>
</dbReference>
<dbReference type="InterPro" id="IPR013785">
    <property type="entry name" value="Aldolase_TIM"/>
</dbReference>
<dbReference type="InterPro" id="IPR005263">
    <property type="entry name" value="DapA"/>
</dbReference>
<dbReference type="InterPro" id="IPR002220">
    <property type="entry name" value="DapA-like"/>
</dbReference>
<dbReference type="InterPro" id="IPR020625">
    <property type="entry name" value="Schiff_base-form_aldolases_AS"/>
</dbReference>
<dbReference type="InterPro" id="IPR020624">
    <property type="entry name" value="Schiff_base-form_aldolases_CS"/>
</dbReference>
<dbReference type="NCBIfam" id="TIGR00674">
    <property type="entry name" value="dapA"/>
    <property type="match status" value="1"/>
</dbReference>
<dbReference type="PANTHER" id="PTHR12128:SF66">
    <property type="entry name" value="4-HYDROXY-2-OXOGLUTARATE ALDOLASE, MITOCHONDRIAL"/>
    <property type="match status" value="1"/>
</dbReference>
<dbReference type="PANTHER" id="PTHR12128">
    <property type="entry name" value="DIHYDRODIPICOLINATE SYNTHASE"/>
    <property type="match status" value="1"/>
</dbReference>
<dbReference type="Pfam" id="PF00701">
    <property type="entry name" value="DHDPS"/>
    <property type="match status" value="1"/>
</dbReference>
<dbReference type="PIRSF" id="PIRSF001365">
    <property type="entry name" value="DHDPS"/>
    <property type="match status" value="1"/>
</dbReference>
<dbReference type="PRINTS" id="PR00146">
    <property type="entry name" value="DHPICSNTHASE"/>
</dbReference>
<dbReference type="SMART" id="SM01130">
    <property type="entry name" value="DHDPS"/>
    <property type="match status" value="1"/>
</dbReference>
<dbReference type="SUPFAM" id="SSF51569">
    <property type="entry name" value="Aldolase"/>
    <property type="match status" value="1"/>
</dbReference>
<dbReference type="PROSITE" id="PS00665">
    <property type="entry name" value="DHDPS_1"/>
    <property type="match status" value="1"/>
</dbReference>
<dbReference type="PROSITE" id="PS00666">
    <property type="entry name" value="DHDPS_2"/>
    <property type="match status" value="1"/>
</dbReference>
<keyword id="KW-0028">Amino-acid biosynthesis</keyword>
<keyword id="KW-0963">Cytoplasm</keyword>
<keyword id="KW-0220">Diaminopimelate biosynthesis</keyword>
<keyword id="KW-0456">Lyase</keyword>
<keyword id="KW-0457">Lysine biosynthesis</keyword>
<keyword id="KW-1185">Reference proteome</keyword>
<keyword id="KW-0704">Schiff base</keyword>
<protein>
    <recommendedName>
        <fullName evidence="1">4-hydroxy-tetrahydrodipicolinate synthase</fullName>
        <shortName evidence="1">HTPA synthase</shortName>
        <ecNumber evidence="1">4.3.3.7</ecNumber>
    </recommendedName>
</protein>
<proteinExistence type="inferred from homology"/>
<reference key="1">
    <citation type="submission" date="2007-11" db="EMBL/GenBank/DDBJ databases">
        <authorList>
            <consortium name="The Salmonella enterica serovar Arizonae Genome Sequencing Project"/>
            <person name="McClelland M."/>
            <person name="Sanderson E.K."/>
            <person name="Porwollik S."/>
            <person name="Spieth J."/>
            <person name="Clifton W.S."/>
            <person name="Fulton R."/>
            <person name="Chunyan W."/>
            <person name="Wollam A."/>
            <person name="Shah N."/>
            <person name="Pepin K."/>
            <person name="Bhonagiri V."/>
            <person name="Nash W."/>
            <person name="Johnson M."/>
            <person name="Thiruvilangam P."/>
            <person name="Wilson R."/>
        </authorList>
    </citation>
    <scope>NUCLEOTIDE SEQUENCE [LARGE SCALE GENOMIC DNA]</scope>
    <source>
        <strain>ATCC BAA-731 / CDC346-86 / RSK2980</strain>
    </source>
</reference>
<feature type="chain" id="PRO_1000080537" description="4-hydroxy-tetrahydrodipicolinate synthase">
    <location>
        <begin position="1"/>
        <end position="292"/>
    </location>
</feature>
<feature type="active site" description="Proton donor/acceptor" evidence="1">
    <location>
        <position position="133"/>
    </location>
</feature>
<feature type="active site" description="Schiff-base intermediate with substrate" evidence="1">
    <location>
        <position position="161"/>
    </location>
</feature>
<feature type="binding site" evidence="1">
    <location>
        <position position="45"/>
    </location>
    <ligand>
        <name>pyruvate</name>
        <dbReference type="ChEBI" id="CHEBI:15361"/>
    </ligand>
</feature>
<feature type="binding site" evidence="1">
    <location>
        <position position="203"/>
    </location>
    <ligand>
        <name>pyruvate</name>
        <dbReference type="ChEBI" id="CHEBI:15361"/>
    </ligand>
</feature>
<feature type="site" description="Part of a proton relay during catalysis" evidence="1">
    <location>
        <position position="44"/>
    </location>
</feature>
<feature type="site" description="Part of a proton relay during catalysis" evidence="1">
    <location>
        <position position="107"/>
    </location>
</feature>
<comment type="function">
    <text evidence="1">Catalyzes the condensation of (S)-aspartate-beta-semialdehyde [(S)-ASA] and pyruvate to 4-hydroxy-tetrahydrodipicolinate (HTPA).</text>
</comment>
<comment type="catalytic activity">
    <reaction evidence="1">
        <text>L-aspartate 4-semialdehyde + pyruvate = (2S,4S)-4-hydroxy-2,3,4,5-tetrahydrodipicolinate + H2O + H(+)</text>
        <dbReference type="Rhea" id="RHEA:34171"/>
        <dbReference type="ChEBI" id="CHEBI:15361"/>
        <dbReference type="ChEBI" id="CHEBI:15377"/>
        <dbReference type="ChEBI" id="CHEBI:15378"/>
        <dbReference type="ChEBI" id="CHEBI:67139"/>
        <dbReference type="ChEBI" id="CHEBI:537519"/>
        <dbReference type="EC" id="4.3.3.7"/>
    </reaction>
</comment>
<comment type="pathway">
    <text evidence="1">Amino-acid biosynthesis; L-lysine biosynthesis via DAP pathway; (S)-tetrahydrodipicolinate from L-aspartate: step 3/4.</text>
</comment>
<comment type="subunit">
    <text evidence="1">Homotetramer; dimer of dimers.</text>
</comment>
<comment type="subcellular location">
    <subcellularLocation>
        <location evidence="1">Cytoplasm</location>
    </subcellularLocation>
</comment>
<comment type="similarity">
    <text evidence="1">Belongs to the DapA family.</text>
</comment>
<comment type="caution">
    <text evidence="2">Was originally thought to be a dihydrodipicolinate synthase (DHDPS), catalyzing the condensation of (S)-aspartate-beta-semialdehyde [(S)-ASA] and pyruvate to dihydrodipicolinate (DHDP). However, it was shown in E.coli that the product of the enzymatic reaction is not dihydrodipicolinate but in fact (4S)-4-hydroxy-2,3,4,5-tetrahydro-(2S)-dipicolinic acid (HTPA), and that the consecutive dehydration reaction leading to DHDP is not spontaneous but catalyzed by DapB.</text>
</comment>
<sequence length="292" mass="31301">MFTGSIVALVTPMDEKGNVSRSCLKKLIDYHVANGTSAIVSVGTTGESATLSHDEHGDVVMMTLELADGRIPVIAGTGANATAEAISLTQRFNDSGVVGCLTVTPYYNRPTQEGLFQHFKAIAEHTDLPQILYNVPSRTGCDMLPETVGRLAEIKNIIAIKEATGNLTRVHQIKELVSDDFILLSGDDASALDFMQLGGHGVISVTANVAARDMADMCKLAAEGQFTEARVINQRLMPLHNKLFVEPNPIPVKWACKALGLVATDTLRLPMTPITDNGRDIVKAALQHAGLL</sequence>
<organism>
    <name type="scientific">Salmonella arizonae (strain ATCC BAA-731 / CDC346-86 / RSK2980)</name>
    <dbReference type="NCBI Taxonomy" id="41514"/>
    <lineage>
        <taxon>Bacteria</taxon>
        <taxon>Pseudomonadati</taxon>
        <taxon>Pseudomonadota</taxon>
        <taxon>Gammaproteobacteria</taxon>
        <taxon>Enterobacterales</taxon>
        <taxon>Enterobacteriaceae</taxon>
        <taxon>Salmonella</taxon>
    </lineage>
</organism>
<evidence type="ECO:0000255" key="1">
    <source>
        <dbReference type="HAMAP-Rule" id="MF_00418"/>
    </source>
</evidence>
<evidence type="ECO:0000305" key="2"/>